<comment type="similarity">
    <text evidence="1">Belongs to the UPF0250 family.</text>
</comment>
<keyword id="KW-1185">Reference proteome</keyword>
<accession>Q88DM3</accession>
<organism>
    <name type="scientific">Pseudomonas putida (strain ATCC 47054 / DSM 6125 / CFBP 8728 / NCIMB 11950 / KT2440)</name>
    <dbReference type="NCBI Taxonomy" id="160488"/>
    <lineage>
        <taxon>Bacteria</taxon>
        <taxon>Pseudomonadati</taxon>
        <taxon>Pseudomonadota</taxon>
        <taxon>Gammaproteobacteria</taxon>
        <taxon>Pseudomonadales</taxon>
        <taxon>Pseudomonadaceae</taxon>
        <taxon>Pseudomonas</taxon>
    </lineage>
</organism>
<name>Y4802_PSEPK</name>
<sequence>MSEPDVKSHKIEFPCDDYPIKVIGDTVVGFKDMVIEVLSKHAKVDLSTLAERQSKEGKYTTVQLHIVAESENQLHDINSALRATGIVKMVL</sequence>
<evidence type="ECO:0000255" key="1">
    <source>
        <dbReference type="HAMAP-Rule" id="MF_00659"/>
    </source>
</evidence>
<feature type="chain" id="PRO_0000209307" description="UPF0250 protein PP_4802">
    <location>
        <begin position="1"/>
        <end position="91"/>
    </location>
</feature>
<protein>
    <recommendedName>
        <fullName evidence="1">UPF0250 protein PP_4802</fullName>
    </recommendedName>
</protein>
<dbReference type="EMBL" id="AE015451">
    <property type="protein sequence ID" value="AAN70371.1"/>
    <property type="molecule type" value="Genomic_DNA"/>
</dbReference>
<dbReference type="RefSeq" id="NP_746907.1">
    <property type="nucleotide sequence ID" value="NC_002947.4"/>
</dbReference>
<dbReference type="RefSeq" id="WP_010955417.1">
    <property type="nucleotide sequence ID" value="NZ_CP169744.1"/>
</dbReference>
<dbReference type="SMR" id="Q88DM3"/>
<dbReference type="STRING" id="160488.PP_4802"/>
<dbReference type="PaxDb" id="160488-PP_4802"/>
<dbReference type="KEGG" id="ppu:PP_4802"/>
<dbReference type="PATRIC" id="fig|160488.4.peg.5124"/>
<dbReference type="eggNOG" id="COG2921">
    <property type="taxonomic scope" value="Bacteria"/>
</dbReference>
<dbReference type="HOGENOM" id="CLU_161438_1_0_6"/>
<dbReference type="OrthoDB" id="9793424at2"/>
<dbReference type="PhylomeDB" id="Q88DM3"/>
<dbReference type="BioCyc" id="PPUT160488:G1G01-5139-MONOMER"/>
<dbReference type="Proteomes" id="UP000000556">
    <property type="component" value="Chromosome"/>
</dbReference>
<dbReference type="GO" id="GO:0005829">
    <property type="term" value="C:cytosol"/>
    <property type="evidence" value="ECO:0007669"/>
    <property type="project" value="TreeGrafter"/>
</dbReference>
<dbReference type="Gene3D" id="3.30.70.260">
    <property type="match status" value="1"/>
</dbReference>
<dbReference type="HAMAP" id="MF_00659">
    <property type="entry name" value="UPF0250"/>
    <property type="match status" value="1"/>
</dbReference>
<dbReference type="InterPro" id="IPR007454">
    <property type="entry name" value="UPF0250_YbeD-like"/>
</dbReference>
<dbReference type="InterPro" id="IPR027471">
    <property type="entry name" value="YbeD-like_sf"/>
</dbReference>
<dbReference type="NCBIfam" id="NF001486">
    <property type="entry name" value="PRK00341.1"/>
    <property type="match status" value="1"/>
</dbReference>
<dbReference type="PANTHER" id="PTHR38036">
    <property type="entry name" value="UPF0250 PROTEIN YBED"/>
    <property type="match status" value="1"/>
</dbReference>
<dbReference type="PANTHER" id="PTHR38036:SF1">
    <property type="entry name" value="UPF0250 PROTEIN YBED"/>
    <property type="match status" value="1"/>
</dbReference>
<dbReference type="Pfam" id="PF04359">
    <property type="entry name" value="DUF493"/>
    <property type="match status" value="1"/>
</dbReference>
<dbReference type="SUPFAM" id="SSF117991">
    <property type="entry name" value="YbeD/HP0495-like"/>
    <property type="match status" value="1"/>
</dbReference>
<reference key="1">
    <citation type="journal article" date="2002" name="Environ. Microbiol.">
        <title>Complete genome sequence and comparative analysis of the metabolically versatile Pseudomonas putida KT2440.</title>
        <authorList>
            <person name="Nelson K.E."/>
            <person name="Weinel C."/>
            <person name="Paulsen I.T."/>
            <person name="Dodson R.J."/>
            <person name="Hilbert H."/>
            <person name="Martins dos Santos V.A.P."/>
            <person name="Fouts D.E."/>
            <person name="Gill S.R."/>
            <person name="Pop M."/>
            <person name="Holmes M."/>
            <person name="Brinkac L.M."/>
            <person name="Beanan M.J."/>
            <person name="DeBoy R.T."/>
            <person name="Daugherty S.C."/>
            <person name="Kolonay J.F."/>
            <person name="Madupu R."/>
            <person name="Nelson W.C."/>
            <person name="White O."/>
            <person name="Peterson J.D."/>
            <person name="Khouri H.M."/>
            <person name="Hance I."/>
            <person name="Chris Lee P."/>
            <person name="Holtzapple E.K."/>
            <person name="Scanlan D."/>
            <person name="Tran K."/>
            <person name="Moazzez A."/>
            <person name="Utterback T.R."/>
            <person name="Rizzo M."/>
            <person name="Lee K."/>
            <person name="Kosack D."/>
            <person name="Moestl D."/>
            <person name="Wedler H."/>
            <person name="Lauber J."/>
            <person name="Stjepandic D."/>
            <person name="Hoheisel J."/>
            <person name="Straetz M."/>
            <person name="Heim S."/>
            <person name="Kiewitz C."/>
            <person name="Eisen J.A."/>
            <person name="Timmis K.N."/>
            <person name="Duesterhoeft A."/>
            <person name="Tuemmler B."/>
            <person name="Fraser C.M."/>
        </authorList>
    </citation>
    <scope>NUCLEOTIDE SEQUENCE [LARGE SCALE GENOMIC DNA]</scope>
    <source>
        <strain>ATCC 47054 / DSM 6125 / CFBP 8728 / NCIMB 11950 / KT2440</strain>
    </source>
</reference>
<gene>
    <name type="ordered locus">PP_4802</name>
</gene>
<proteinExistence type="inferred from homology"/>